<gene>
    <name type="primary">TAF9</name>
    <name type="synonym">TAF17</name>
    <name type="ordered locus">YMR236W</name>
    <name type="ORF">YM9959.18</name>
</gene>
<feature type="chain" id="PRO_0000118896" description="SAGA complex/transcription factor TFIID complex subunit TAF9">
    <location>
        <begin position="1"/>
        <end position="157"/>
    </location>
</feature>
<feature type="domain" description="Histone-fold">
    <location>
        <begin position="30"/>
        <end position="97"/>
    </location>
</feature>
<feature type="region of interest" description="Disordered" evidence="1">
    <location>
        <begin position="1"/>
        <end position="29"/>
    </location>
</feature>
<feature type="helix" evidence="28">
    <location>
        <begin position="31"/>
        <end position="42"/>
    </location>
</feature>
<feature type="helix" evidence="28">
    <location>
        <begin position="51"/>
        <end position="77"/>
    </location>
</feature>
<feature type="helix" evidence="28">
    <location>
        <begin position="90"/>
        <end position="98"/>
    </location>
</feature>
<feature type="turn" evidence="28">
    <location>
        <begin position="99"/>
        <end position="103"/>
    </location>
</feature>
<feature type="helix" evidence="28">
    <location>
        <begin position="111"/>
        <end position="121"/>
    </location>
</feature>
<feature type="strand" evidence="28">
    <location>
        <begin position="131"/>
        <end position="134"/>
    </location>
</feature>
<feature type="helix" evidence="28">
    <location>
        <begin position="140"/>
        <end position="142"/>
    </location>
</feature>
<sequence>MNGGGKNVLNKNSVGSVSEVGPDSTQEETPRDVRLLHLLLASQSIHQYEDQVPLQLMDFAHRYTQGVLKDALVYNDYAGSGNSAGSGLGVEDIRLAIAARTQYQFKPTAPKELMLQLAAERNKKALPQVMGTWGVRLPPEKYCLTAKEWDLEDPKSM</sequence>
<comment type="function">
    <text evidence="2 3 4 5 8 9 10 11 12 15 18 19 20 21 22 24">Functions as a component of both the DNA-binding general transcription initiation factor complex TFIID and the transcription coactivator SAGA complex (PubMed:10788514, PubMed:12052880, PubMed:12138208, PubMed:25216679, PubMed:9844639). Binding of TFIID to a promoter (with or without TATA element) is the initial step in pre-initiation complex (PIC) formation. TFIID plays a key role in the regulation of gene expression by RNA polymerase II through different activities such as transcription activator interaction, core promoter recognition and selectivity, TFIIA and TFIIB interaction, chromatin modification (histone acetylation by TAF1), facilitation of DNA opening and initiation of transcription (PubMed:11238921, PubMed:12516863, PubMed:15448131). SAGA acts as a general cofactor required for essentially all RNA polymerase II transcription (PubMed:10864329, PubMed:25216679, PubMed:9674426). At the promoters, SAGA is required for transcription pre-initiation complex (PIC) recruitment. It influences RNA polymerase II transcriptional activity through different activities such as TBP interaction (via core/TAF module) and promoter selectivity, interaction with transcription activators (via Tra1/SPT module), and chromatin modification through histone acetylation (via HAT module) and deubiquitination (via DUB module) (PubMed:12840001, PubMed:31969703). SAGA preferentially acetylates histones H3 (to form H3K9ac, H3K14ac, H3K18ac and H3K23ac) and H2B and deubiquitinates histone H2B (PubMed:10026213). SAGA interacts with DNA via upstream activating sequences (UASs) (PubMed:28918903). Also identified in a modified version of SAGA named SALSA or SLIK (PubMed:12446794). The cleavage of SPT7 and the absence of the SPT8 subunit in SLIK neither drive any major conformational differences in its structure compared with SAGA, nor significantly affect HAT, DUB, or DNA-binding activities (PubMed:33864814).</text>
</comment>
<comment type="subunit">
    <text evidence="3 6 7 8 10 15 16 17 18 20 21 22 23">Component of the 1.8 MDa SAGA (Spt-Ada-Gcn5 acetyltransferase) complex, which is composed of 19 subunits TRA1, SPT7, TAF5, NGG1/ADA3, SGF73, SPT20/ADA5, SPT8, TAF12, TAF6, HFI1/ADA1, UBP8, GCN5, ADA2, SPT3, SGF29, TAF10, TAF9, SGF11 and SUS1 (PubMed:12052880, PubMed:31969703, PubMed:9674426). The SAGA complex is composed of 4 modules, namely the HAT (histone acetyltransferase) module (GCN5, ADA2, NGG1/ADA3 and SGF29), the DUB (deubiquitinating) module (UBP8, SGF11, SGF73 and SUS1), the core or TAF (TBP-associated factor) module (TAF5, TAF6, TAF9, TAF10 and TAF12), and the Tra1 or SPT (Suppressor of Ty) module (TRA1, HFI1/ADA1, SPT3, SPT7, SPT8 and SPT20/ADA5). The Tra1/SPT module binds activators, the core module recruits TBP (TATA-binding protein), the HAT module contains the histone H3 acetyltransferase GCN5, and the DUB module comprises the histone H2B deubiquitinase UBP8 (PubMed:21734642, PubMed:25216679, PubMed:31969703). Also identified in an altered form of SAGA, named SALSA (SAGA altered, Spt8 absent) or SLIK (SAGA-like) complex, which contains a C-terminal truncated form of SPT7 and is missing SPT8 (PubMed:12446794, PubMed:15647753). However, it has been shown that the SAGA and SAGA-like SALSA/SLIK transcriptional coactivators are structurally and biochemically equivalent (PubMed:33864814). Component of the 1.2 MDa TFIID complex, which is composed of TATA-binding protein (TBP) and the 14 TBP-associated factors (TAFs). It comprises 1 copy of each TAF1, TAF2, TAF3, TAF7, TAF8, TAF11, TAF13, 2 copies of each TAF4, TAF5, TAF6, TAF9, TAF10, TAF12, and 3 copies of TAF14. In TFIID, TAF9 heterodimerizes with TAF6, forming ultimately an octamer consisting of a TAF6-TAF9 heterotetramer core flanked by TAF4-TAF12 dimers on either side, similar to the histone H2A-H2B-H3-H4 octamer (PubMed:10788514, PubMed:11295558, PubMed:11473260, PubMed:15448131, PubMed:9695952).</text>
</comment>
<comment type="interaction">
    <interactant intactId="EBI-27500">
        <id>Q05027</id>
    </interactant>
    <interactant intactId="EBI-11231">
        <id>P50105</id>
        <label>TAF4</label>
    </interactant>
    <organismsDiffer>false</organismsDiffer>
    <experiments>11</experiments>
</comment>
<comment type="interaction">
    <interactant intactId="EBI-27500">
        <id>Q05027</id>
    </interactant>
    <interactant intactId="EBI-18876">
        <id>P53040</id>
        <label>TAF6</label>
    </interactant>
    <organismsDiffer>false</organismsDiffer>
    <experiments>12</experiments>
</comment>
<comment type="interaction">
    <interactant intactId="EBI-27500">
        <id>Q05027</id>
    </interactant>
    <interactant intactId="EBI-27500">
        <id>Q05027</id>
        <label>TAF9</label>
    </interactant>
    <organismsDiffer>false</organismsDiffer>
    <experiments>6</experiments>
</comment>
<comment type="subcellular location">
    <subcellularLocation>
        <location evidence="13">Nucleus</location>
    </subcellularLocation>
</comment>
<comment type="miscellaneous">
    <text evidence="14">Present with 7000 molecules/cell in log phase SD medium.</text>
</comment>
<comment type="similarity">
    <text evidence="25">Belongs to the TAF9 family.</text>
</comment>
<evidence type="ECO:0000256" key="1">
    <source>
        <dbReference type="SAM" id="MobiDB-lite"/>
    </source>
</evidence>
<evidence type="ECO:0000269" key="2">
    <source>
    </source>
</evidence>
<evidence type="ECO:0000269" key="3">
    <source>
    </source>
</evidence>
<evidence type="ECO:0000269" key="4">
    <source>
    </source>
</evidence>
<evidence type="ECO:0000269" key="5">
    <source>
    </source>
</evidence>
<evidence type="ECO:0000269" key="6">
    <source>
    </source>
</evidence>
<evidence type="ECO:0000269" key="7">
    <source>
    </source>
</evidence>
<evidence type="ECO:0000269" key="8">
    <source>
    </source>
</evidence>
<evidence type="ECO:0000269" key="9">
    <source>
    </source>
</evidence>
<evidence type="ECO:0000269" key="10">
    <source>
    </source>
</evidence>
<evidence type="ECO:0000269" key="11">
    <source>
    </source>
</evidence>
<evidence type="ECO:0000269" key="12">
    <source>
    </source>
</evidence>
<evidence type="ECO:0000269" key="13">
    <source>
    </source>
</evidence>
<evidence type="ECO:0000269" key="14">
    <source>
    </source>
</evidence>
<evidence type="ECO:0000269" key="15">
    <source>
    </source>
</evidence>
<evidence type="ECO:0000269" key="16">
    <source>
    </source>
</evidence>
<evidence type="ECO:0000269" key="17">
    <source>
    </source>
</evidence>
<evidence type="ECO:0000269" key="18">
    <source>
    </source>
</evidence>
<evidence type="ECO:0000269" key="19">
    <source>
    </source>
</evidence>
<evidence type="ECO:0000269" key="20">
    <source>
    </source>
</evidence>
<evidence type="ECO:0000269" key="21">
    <source>
    </source>
</evidence>
<evidence type="ECO:0000269" key="22">
    <source>
    </source>
</evidence>
<evidence type="ECO:0000269" key="23">
    <source>
    </source>
</evidence>
<evidence type="ECO:0000269" key="24">
    <source>
    </source>
</evidence>
<evidence type="ECO:0000305" key="25"/>
<evidence type="ECO:0007744" key="26">
    <source>
        <dbReference type="PDB" id="6T9I"/>
    </source>
</evidence>
<evidence type="ECO:0007744" key="27">
    <source>
        <dbReference type="PDB" id="6T9K"/>
    </source>
</evidence>
<evidence type="ECO:0007829" key="28">
    <source>
        <dbReference type="PDB" id="6T9K"/>
    </source>
</evidence>
<accession>Q05027</accession>
<accession>D6W062</accession>
<organism>
    <name type="scientific">Saccharomyces cerevisiae (strain ATCC 204508 / S288c)</name>
    <name type="common">Baker's yeast</name>
    <dbReference type="NCBI Taxonomy" id="559292"/>
    <lineage>
        <taxon>Eukaryota</taxon>
        <taxon>Fungi</taxon>
        <taxon>Dikarya</taxon>
        <taxon>Ascomycota</taxon>
        <taxon>Saccharomycotina</taxon>
        <taxon>Saccharomycetes</taxon>
        <taxon>Saccharomycetales</taxon>
        <taxon>Saccharomycetaceae</taxon>
        <taxon>Saccharomyces</taxon>
    </lineage>
</organism>
<keyword id="KW-0002">3D-structure</keyword>
<keyword id="KW-0539">Nucleus</keyword>
<keyword id="KW-1185">Reference proteome</keyword>
<keyword id="KW-0804">Transcription</keyword>
<keyword id="KW-0805">Transcription regulation</keyword>
<dbReference type="EMBL" id="Z49939">
    <property type="protein sequence ID" value="CAA90207.1"/>
    <property type="molecule type" value="Genomic_DNA"/>
</dbReference>
<dbReference type="EMBL" id="BK006946">
    <property type="protein sequence ID" value="DAA10136.1"/>
    <property type="molecule type" value="Genomic_DNA"/>
</dbReference>
<dbReference type="PIR" id="S57603">
    <property type="entry name" value="S57603"/>
</dbReference>
<dbReference type="RefSeq" id="NP_013963.1">
    <property type="nucleotide sequence ID" value="NM_001182743.1"/>
</dbReference>
<dbReference type="PDB" id="6T9I">
    <property type="method" value="EM"/>
    <property type="resolution" value="3.90 A"/>
    <property type="chains" value="F=1-157"/>
</dbReference>
<dbReference type="PDB" id="6T9K">
    <property type="method" value="EM"/>
    <property type="resolution" value="3.30 A"/>
    <property type="chains" value="F=1-157"/>
</dbReference>
<dbReference type="PDBsum" id="6T9I"/>
<dbReference type="PDBsum" id="6T9K"/>
<dbReference type="EMDB" id="EMD-10412"/>
<dbReference type="EMDB" id="EMD-10414"/>
<dbReference type="SMR" id="Q05027"/>
<dbReference type="BioGRID" id="35414">
    <property type="interactions" value="471"/>
</dbReference>
<dbReference type="ComplexPortal" id="CPX-1642">
    <property type="entry name" value="General transcription factor complex TFIID"/>
</dbReference>
<dbReference type="ComplexPortal" id="CPX-656">
    <property type="entry name" value="SAGA complex"/>
</dbReference>
<dbReference type="ComplexPortal" id="CPX-675">
    <property type="entry name" value="SLIK (SAGA-like) complex"/>
</dbReference>
<dbReference type="DIP" id="DIP-925N"/>
<dbReference type="FunCoup" id="Q05027">
    <property type="interactions" value="668"/>
</dbReference>
<dbReference type="IntAct" id="Q05027">
    <property type="interactions" value="156"/>
</dbReference>
<dbReference type="MINT" id="Q05027"/>
<dbReference type="STRING" id="4932.YMR236W"/>
<dbReference type="GlyGen" id="Q05027">
    <property type="glycosylation" value="1 site, 1 O-linked glycan (1 site)"/>
</dbReference>
<dbReference type="iPTMnet" id="Q05027"/>
<dbReference type="PaxDb" id="4932-YMR236W"/>
<dbReference type="PeptideAtlas" id="Q05027"/>
<dbReference type="EnsemblFungi" id="YMR236W_mRNA">
    <property type="protein sequence ID" value="YMR236W"/>
    <property type="gene ID" value="YMR236W"/>
</dbReference>
<dbReference type="GeneID" id="855276"/>
<dbReference type="KEGG" id="sce:YMR236W"/>
<dbReference type="AGR" id="SGD:S000004849"/>
<dbReference type="SGD" id="S000004849">
    <property type="gene designation" value="TAF9"/>
</dbReference>
<dbReference type="VEuPathDB" id="FungiDB:YMR236W"/>
<dbReference type="eggNOG" id="KOG3334">
    <property type="taxonomic scope" value="Eukaryota"/>
</dbReference>
<dbReference type="GeneTree" id="ENSGT00940000169542"/>
<dbReference type="HOGENOM" id="CLU_068315_3_0_1"/>
<dbReference type="InParanoid" id="Q05027"/>
<dbReference type="OMA" id="PHDAQVM"/>
<dbReference type="OrthoDB" id="341924at2759"/>
<dbReference type="BioCyc" id="YEAST:G3O-32917-MONOMER"/>
<dbReference type="Reactome" id="R-SCE-5689880">
    <property type="pathway name" value="Ub-specific processing proteases"/>
</dbReference>
<dbReference type="Reactome" id="R-SCE-674695">
    <property type="pathway name" value="RNA Polymerase II Pre-transcription Events"/>
</dbReference>
<dbReference type="Reactome" id="R-SCE-6807505">
    <property type="pathway name" value="RNA polymerase II transcribes snRNA genes"/>
</dbReference>
<dbReference type="Reactome" id="R-SCE-73776">
    <property type="pathway name" value="RNA Polymerase II Promoter Escape"/>
</dbReference>
<dbReference type="Reactome" id="R-SCE-73779">
    <property type="pathway name" value="RNA Polymerase II Transcription Pre-Initiation And Promoter Opening"/>
</dbReference>
<dbReference type="Reactome" id="R-SCE-75953">
    <property type="pathway name" value="RNA Polymerase II Transcription Initiation"/>
</dbReference>
<dbReference type="Reactome" id="R-SCE-76042">
    <property type="pathway name" value="RNA Polymerase II Transcription Initiation And Promoter Clearance"/>
</dbReference>
<dbReference type="BioGRID-ORCS" id="855276">
    <property type="hits" value="10 hits in 10 CRISPR screens"/>
</dbReference>
<dbReference type="PRO" id="PR:Q05027"/>
<dbReference type="Proteomes" id="UP000002311">
    <property type="component" value="Chromosome XIII"/>
</dbReference>
<dbReference type="RNAct" id="Q05027">
    <property type="molecule type" value="protein"/>
</dbReference>
<dbReference type="GO" id="GO:0005634">
    <property type="term" value="C:nucleus"/>
    <property type="evidence" value="ECO:0000303"/>
    <property type="project" value="ComplexPortal"/>
</dbReference>
<dbReference type="GO" id="GO:0000124">
    <property type="term" value="C:SAGA complex"/>
    <property type="evidence" value="ECO:0000314"/>
    <property type="project" value="SGD"/>
</dbReference>
<dbReference type="GO" id="GO:0046695">
    <property type="term" value="C:SLIK (SAGA-like) complex"/>
    <property type="evidence" value="ECO:0000314"/>
    <property type="project" value="SGD"/>
</dbReference>
<dbReference type="GO" id="GO:0005669">
    <property type="term" value="C:transcription factor TFIID complex"/>
    <property type="evidence" value="ECO:0000314"/>
    <property type="project" value="SGD"/>
</dbReference>
<dbReference type="GO" id="GO:0003682">
    <property type="term" value="F:chromatin binding"/>
    <property type="evidence" value="ECO:0000314"/>
    <property type="project" value="SGD"/>
</dbReference>
<dbReference type="GO" id="GO:0042802">
    <property type="term" value="F:identical protein binding"/>
    <property type="evidence" value="ECO:0000353"/>
    <property type="project" value="IntAct"/>
</dbReference>
<dbReference type="GO" id="GO:0060090">
    <property type="term" value="F:molecular adaptor activity"/>
    <property type="evidence" value="ECO:0000315"/>
    <property type="project" value="SGD"/>
</dbReference>
<dbReference type="GO" id="GO:0046982">
    <property type="term" value="F:protein heterodimerization activity"/>
    <property type="evidence" value="ECO:0007669"/>
    <property type="project" value="InterPro"/>
</dbReference>
<dbReference type="GO" id="GO:0003713">
    <property type="term" value="F:transcription coactivator activity"/>
    <property type="evidence" value="ECO:0000318"/>
    <property type="project" value="GO_Central"/>
</dbReference>
<dbReference type="GO" id="GO:0006325">
    <property type="term" value="P:chromatin organization"/>
    <property type="evidence" value="ECO:0000314"/>
    <property type="project" value="SGD"/>
</dbReference>
<dbReference type="GO" id="GO:0045944">
    <property type="term" value="P:positive regulation of transcription by RNA polymerase II"/>
    <property type="evidence" value="ECO:0000314"/>
    <property type="project" value="ComplexPortal"/>
</dbReference>
<dbReference type="GO" id="GO:0006357">
    <property type="term" value="P:regulation of transcription by RNA polymerase II"/>
    <property type="evidence" value="ECO:0000314"/>
    <property type="project" value="ComplexPortal"/>
</dbReference>
<dbReference type="GO" id="GO:0051123">
    <property type="term" value="P:RNA polymerase II preinitiation complex assembly"/>
    <property type="evidence" value="ECO:0000315"/>
    <property type="project" value="SGD"/>
</dbReference>
<dbReference type="GO" id="GO:0006366">
    <property type="term" value="P:transcription by RNA polymerase II"/>
    <property type="evidence" value="ECO:0000314"/>
    <property type="project" value="SGD"/>
</dbReference>
<dbReference type="CDD" id="cd07979">
    <property type="entry name" value="HFD_TAF9"/>
    <property type="match status" value="1"/>
</dbReference>
<dbReference type="FunFam" id="1.10.20.10:FF:000064">
    <property type="entry name" value="Transcription initiation factor TFIID subunit 9"/>
    <property type="match status" value="1"/>
</dbReference>
<dbReference type="Gene3D" id="1.10.20.10">
    <property type="entry name" value="Histone, subunit A"/>
    <property type="match status" value="1"/>
</dbReference>
<dbReference type="InterPro" id="IPR009072">
    <property type="entry name" value="Histone-fold"/>
</dbReference>
<dbReference type="InterPro" id="IPR003162">
    <property type="entry name" value="TFIID-31"/>
</dbReference>
<dbReference type="InterPro" id="IPR051431">
    <property type="entry name" value="TFIID_subunit_9"/>
</dbReference>
<dbReference type="PANTHER" id="PTHR48068">
    <property type="entry name" value="TAF9 RNA POLYMERASE II, TATA BOX-BINDING PROTEIN (TBP)-ASSOCIATED FACTOR"/>
    <property type="match status" value="1"/>
</dbReference>
<dbReference type="PANTHER" id="PTHR48068:SF4">
    <property type="entry name" value="TATA-BOX BINDING PROTEIN ASSOCIATED FACTOR 9"/>
    <property type="match status" value="1"/>
</dbReference>
<dbReference type="Pfam" id="PF02291">
    <property type="entry name" value="TFIID-31kDa"/>
    <property type="match status" value="1"/>
</dbReference>
<dbReference type="SUPFAM" id="SSF47113">
    <property type="entry name" value="Histone-fold"/>
    <property type="match status" value="1"/>
</dbReference>
<name>TAF9_YEAST</name>
<proteinExistence type="evidence at protein level"/>
<reference key="1">
    <citation type="journal article" date="1997" name="Nature">
        <title>The nucleotide sequence of Saccharomyces cerevisiae chromosome XIII.</title>
        <authorList>
            <person name="Bowman S."/>
            <person name="Churcher C.M."/>
            <person name="Badcock K."/>
            <person name="Brown D."/>
            <person name="Chillingworth T."/>
            <person name="Connor R."/>
            <person name="Dedman K."/>
            <person name="Devlin K."/>
            <person name="Gentles S."/>
            <person name="Hamlin N."/>
            <person name="Hunt S."/>
            <person name="Jagels K."/>
            <person name="Lye G."/>
            <person name="Moule S."/>
            <person name="Odell C."/>
            <person name="Pearson D."/>
            <person name="Rajandream M.A."/>
            <person name="Rice P."/>
            <person name="Skelton J."/>
            <person name="Walsh S.V."/>
            <person name="Whitehead S."/>
            <person name="Barrell B.G."/>
        </authorList>
    </citation>
    <scope>NUCLEOTIDE SEQUENCE [LARGE SCALE GENOMIC DNA]</scope>
    <source>
        <strain>ATCC 204508 / S288c</strain>
    </source>
</reference>
<reference key="2">
    <citation type="journal article" date="2014" name="G3 (Bethesda)">
        <title>The reference genome sequence of Saccharomyces cerevisiae: Then and now.</title>
        <authorList>
            <person name="Engel S.R."/>
            <person name="Dietrich F.S."/>
            <person name="Fisk D.G."/>
            <person name="Binkley G."/>
            <person name="Balakrishnan R."/>
            <person name="Costanzo M.C."/>
            <person name="Dwight S.S."/>
            <person name="Hitz B.C."/>
            <person name="Karra K."/>
            <person name="Nash R.S."/>
            <person name="Weng S."/>
            <person name="Wong E.D."/>
            <person name="Lloyd P."/>
            <person name="Skrzypek M.S."/>
            <person name="Miyasato S.R."/>
            <person name="Simison M."/>
            <person name="Cherry J.M."/>
        </authorList>
    </citation>
    <scope>GENOME REANNOTATION</scope>
    <source>
        <strain>ATCC 204508 / S288c</strain>
    </source>
</reference>
<reference key="3">
    <citation type="journal article" date="1998" name="Cell">
        <title>Human TAF(II)28 and TAF(II)18 interact through a histone fold encoded by atypical evolutionary conserved motifs also found in the SPT3 family.</title>
        <authorList>
            <person name="Birck C."/>
            <person name="Poch O."/>
            <person name="Romier C."/>
            <person name="Ruff M."/>
            <person name="Mengus G."/>
            <person name="Lavigne A.C."/>
            <person name="Davidson I."/>
            <person name="Moras D."/>
        </authorList>
    </citation>
    <scope>FUNCTION</scope>
    <scope>TAF-TAF INTERACTION THROUGH HISTONE-FOLD DOMAIN</scope>
</reference>
<reference key="4">
    <citation type="journal article" date="1998" name="Cell">
        <title>A subset of TAF(II)s are integral components of the SAGA complex required for nucleosome acetylation and transcriptional stimulation.</title>
        <authorList>
            <person name="Grant P.A."/>
            <person name="Schieltz D."/>
            <person name="Pray-Grant M.G."/>
            <person name="Steger D.J."/>
            <person name="Reese J.C."/>
            <person name="Yates J.R. III"/>
            <person name="Workman J.L."/>
        </authorList>
    </citation>
    <scope>FUNCTION</scope>
    <scope>IDENTIFICATION IN THE SAGA COMPLEX</scope>
    <scope>IDENTIFICATION BY MASS SPECTROMETRY</scope>
</reference>
<reference key="5">
    <citation type="journal article" date="1998" name="Mol. Cell">
        <title>The histone H3-like TAF is broadly required for transcription in yeast.</title>
        <authorList>
            <person name="Moqtaderi Z."/>
            <person name="Keaveney M."/>
            <person name="Struhl K."/>
        </authorList>
    </citation>
    <scope>FUNCTION</scope>
</reference>
<reference key="6">
    <citation type="journal article" date="1999" name="J. Biol. Chem.">
        <title>Expanded lysine acetylation specificity of Gcn5 in native complexes.</title>
        <authorList>
            <person name="Grant P.A."/>
            <person name="Eberharter A."/>
            <person name="John S."/>
            <person name="Cook R.G."/>
            <person name="Turner B.M."/>
            <person name="Workman J.L."/>
        </authorList>
    </citation>
    <scope>FUNCTION IN HISTONE ACETYLATION AT THE SAGA COMPLEX</scope>
</reference>
<reference key="7">
    <citation type="journal article" date="2000" name="J. Biol. Chem.">
        <title>Identification of two novel TAF subunits of the yeast Saccharomyces cerevisiae TFIID complex.</title>
        <authorList>
            <person name="Sanders S.L."/>
            <person name="Weil P.A."/>
        </authorList>
    </citation>
    <scope>FUNCTION</scope>
    <scope>SUBUNIT</scope>
</reference>
<reference key="8">
    <citation type="journal article" date="2000" name="Nature">
        <title>Redundant roles for the TFIID and SAGA complexes in global transcription.</title>
        <authorList>
            <person name="Lee T.I."/>
            <person name="Causton H.C."/>
            <person name="Holstege F.C."/>
            <person name="Shen W.C."/>
            <person name="Hannett N."/>
            <person name="Jennings E.G."/>
            <person name="Winston F."/>
            <person name="Green M.R."/>
            <person name="Young R.A."/>
        </authorList>
    </citation>
    <scope>FUNCTION</scope>
</reference>
<reference key="9">
    <citation type="journal article" date="2001" name="Mol. Cell. Biol.">
        <title>Histone folds mediate selective heterodimerization of yeast TAF(II)25 with TFIID components yTAF(II)47 and yTAF(II)65 and with SAGA component ySPT7.</title>
        <authorList>
            <person name="Gangloff Y.G."/>
            <person name="Sanders S.L."/>
            <person name="Romier C."/>
            <person name="Kirschner D.B."/>
            <person name="Weil P.A."/>
            <person name="Tora L."/>
            <person name="Davidson I."/>
        </authorList>
    </citation>
    <scope>FUNCTION</scope>
    <scope>INTERACTION IN TFIID AND SAGA</scope>
</reference>
<reference key="10">
    <citation type="journal article" date="2001" name="Trends Biochem. Sci.">
        <title>The histone fold is a key structural motif of transcription factor TFIID.</title>
        <authorList>
            <person name="Gangloff Y.G."/>
            <person name="Romier C."/>
            <person name="Thuault S."/>
            <person name="Werten S."/>
            <person name="Davidson I."/>
        </authorList>
    </citation>
    <scope>FUNCTION</scope>
    <scope>HISTONE-FOLD DOMAIN CHARACTERIZATION</scope>
</reference>
<reference key="11">
    <citation type="journal article" date="2001" name="Nat. Struct. Biol.">
        <title>A histone fold TAF octamer within the yeast TFIID transcriptional coactivator.</title>
        <authorList>
            <person name="Selleck W."/>
            <person name="Howley R."/>
            <person name="Fang Q."/>
            <person name="Podolny V."/>
            <person name="Fried M.G."/>
            <person name="Buratowski S."/>
            <person name="Tan S."/>
        </authorList>
    </citation>
    <scope>FUNCTION</scope>
    <scope>TAF OCTAMER FORMATION</scope>
</reference>
<reference key="12">
    <citation type="journal article" date="2002" name="Mol. Cell. Biol.">
        <title>Proteomics of the eukaryotic transcription machinery: identification of proteins associated with components of yeast TFIID by multidimensional mass spectrometry.</title>
        <authorList>
            <person name="Sanders S.L."/>
            <person name="Jennings J."/>
            <person name="Canutescu A."/>
            <person name="Link A.J."/>
            <person name="Weil P.A."/>
        </authorList>
    </citation>
    <scope>FUNCTION</scope>
    <scope>IDENTIFICATION IN THE SAGA COMPLEX</scope>
</reference>
<reference key="13">
    <citation type="journal article" date="2002" name="Mol. Cell. Biol.">
        <title>Molecular characterization of Saccharomyces cerevisiae TFIID.</title>
        <authorList>
            <person name="Sanders S.L."/>
            <person name="Garbett K.A."/>
            <person name="Weil P.A."/>
        </authorList>
    </citation>
    <scope>FUNCTION</scope>
    <scope>TFIID STOICHIOMETRY</scope>
</reference>
<reference key="14">
    <citation type="journal article" date="2002" name="Mol. Cell. Biol.">
        <title>The novel SLIK histone acetyltransferase complex functions in the yeast retrograde response pathway.</title>
        <authorList>
            <person name="Pray-Grant M.G."/>
            <person name="Schieltz D."/>
            <person name="McMahon S.J."/>
            <person name="Wood J.M."/>
            <person name="Kennedy E.L."/>
            <person name="Cook R.G."/>
            <person name="Workman J.L."/>
            <person name="Yates J.R. III"/>
            <person name="Grant P.A."/>
        </authorList>
    </citation>
    <scope>IDENTIFICATION IN THE SLIK COMPLEX</scope>
</reference>
<reference key="15">
    <citation type="journal article" date="2002" name="Plant Mol. Biol.">
        <title>Multi-protein complexes in eukaryotic gene transcription.</title>
        <authorList>
            <person name="Martinez E."/>
        </authorList>
    </citation>
    <scope>FUNCTION</scope>
</reference>
<reference key="16">
    <citation type="journal article" date="2003" name="EMBO J.">
        <title>Systematic analysis of essential yeast TAFs in genome-wide transcription and preinitiation complex assembly.</title>
        <authorList>
            <person name="Shen W.C."/>
            <person name="Bhaumik S.R."/>
            <person name="Causton H.C."/>
            <person name="Simon I."/>
            <person name="Zhu X."/>
            <person name="Jennings E.G."/>
            <person name="Wang T.H."/>
            <person name="Young R.A."/>
            <person name="Green M.R."/>
        </authorList>
    </citation>
    <scope>FUNCTION</scope>
</reference>
<reference key="17">
    <citation type="journal article" date="2003" name="Nature">
        <title>Global analysis of protein localization in budding yeast.</title>
        <authorList>
            <person name="Huh W.-K."/>
            <person name="Falvo J.V."/>
            <person name="Gerke L.C."/>
            <person name="Carroll A.S."/>
            <person name="Howson R.W."/>
            <person name="Weissman J.S."/>
            <person name="O'Shea E.K."/>
        </authorList>
    </citation>
    <scope>SUBCELLULAR LOCATION [LARGE SCALE ANALYSIS]</scope>
</reference>
<reference key="18">
    <citation type="journal article" date="2003" name="Nature">
        <title>Global analysis of protein expression in yeast.</title>
        <authorList>
            <person name="Ghaemmaghami S."/>
            <person name="Huh W.-K."/>
            <person name="Bower K."/>
            <person name="Howson R.W."/>
            <person name="Belle A."/>
            <person name="Dephoure N."/>
            <person name="O'Shea E.K."/>
            <person name="Weissman J.S."/>
        </authorList>
    </citation>
    <scope>LEVEL OF PROTEIN EXPRESSION [LARGE SCALE ANALYSIS]</scope>
</reference>
<reference key="19">
    <citation type="journal article" date="2004" name="J. Biol. Chem.">
        <title>Purification of active TFIID from Saccharomyces cerevisiae. Extensive promoter contacts and co-activator function.</title>
        <authorList>
            <person name="Auty R."/>
            <person name="Steen H."/>
            <person name="Myers L.C."/>
            <person name="Persinger J."/>
            <person name="Bartholomew B."/>
            <person name="Gygi S.P."/>
            <person name="Buratowski S."/>
        </authorList>
    </citation>
    <scope>FUNCTION IN THE TFIID COMPLEX</scope>
</reference>
<reference key="20">
    <citation type="journal article" date="2005" name="Nature">
        <title>Chd1 chromodomain links histone H3 methylation with SAGA- and SLIK-dependent acetylation.</title>
        <authorList>
            <person name="Pray-Grant M.G."/>
            <person name="Daniel J.A."/>
            <person name="Schieltz D."/>
            <person name="Yates J.R. III"/>
            <person name="Grant P.A."/>
        </authorList>
    </citation>
    <scope>IDENTIFICATION IN THE SLIK COMPLEX</scope>
</reference>
<reference key="21">
    <citation type="journal article" date="2002" name="EMBO J.">
        <title>Mapping histone fold TAFs within yeast TFIID.</title>
        <authorList>
            <person name="Leurent C."/>
            <person name="Sanders S.L."/>
            <person name="Ruhlmann C."/>
            <person name="Mallouh V."/>
            <person name="Weil P.A."/>
            <person name="Kirschner D.B."/>
            <person name="Tora L."/>
            <person name="Schultz P."/>
        </authorList>
    </citation>
    <scope>3D-STRUCTURE</scope>
    <scope>ELECTRON MICROSCOPY OF TFIID</scope>
</reference>
<reference key="22">
    <citation type="journal article" date="2008" name="Mol. Cell. Proteomics">
        <title>A multidimensional chromatography technology for in-depth phosphoproteome analysis.</title>
        <authorList>
            <person name="Albuquerque C.P."/>
            <person name="Smolka M.B."/>
            <person name="Payne S.H."/>
            <person name="Bafna V."/>
            <person name="Eng J."/>
            <person name="Zhou H."/>
        </authorList>
    </citation>
    <scope>IDENTIFICATION BY MASS SPECTROMETRY [LARGE SCALE ANALYSIS]</scope>
</reference>
<reference key="23">
    <citation type="journal article" date="2009" name="Science">
        <title>Global analysis of Cdk1 substrate phosphorylation sites provides insights into evolution.</title>
        <authorList>
            <person name="Holt L.J."/>
            <person name="Tuch B.B."/>
            <person name="Villen J."/>
            <person name="Johnson A.D."/>
            <person name="Gygi S.P."/>
            <person name="Morgan D.O."/>
        </authorList>
    </citation>
    <scope>IDENTIFICATION BY MASS SPECTROMETRY [LARGE SCALE ANALYSIS]</scope>
</reference>
<reference key="24">
    <citation type="journal article" date="2011" name="Mol. Syst. Biol.">
        <title>Combinatorial depletion analysis to assemble the network architecture of the SAGA and ADA chromatin remodeling complexes.</title>
        <authorList>
            <person name="Lee K.K."/>
            <person name="Sardiu M.E."/>
            <person name="Swanson S.K."/>
            <person name="Gilmore J.M."/>
            <person name="Torok M."/>
            <person name="Grant P.A."/>
            <person name="Florens L."/>
            <person name="Workman J.L."/>
            <person name="Washburn M.P."/>
        </authorList>
    </citation>
    <scope>SUBUNIT</scope>
</reference>
<reference key="25">
    <citation type="journal article" date="2014" name="EMBO J.">
        <title>Architecture of the Saccharomyces cerevisiae SAGA transcription coactivator complex.</title>
        <authorList>
            <person name="Han Y."/>
            <person name="Luo J."/>
            <person name="Ranish J."/>
            <person name="Hahn S."/>
        </authorList>
    </citation>
    <scope>SUBUNIT</scope>
</reference>
<reference key="26">
    <citation type="journal article" date="2017" name="Mol. Cell">
        <title>SAGA is a general cofactor for RNA polymerase II transcription.</title>
        <authorList>
            <person name="Baptista T."/>
            <person name="Gruenberg S."/>
            <person name="Minoungou N."/>
            <person name="Koster M.J.E."/>
            <person name="Timmers H.T.M."/>
            <person name="Hahn S."/>
            <person name="Devys D."/>
            <person name="Tora L."/>
        </authorList>
    </citation>
    <scope>FUNCTION</scope>
</reference>
<reference key="27">
    <citation type="journal article" date="2021" name="J. Biol. Chem.">
        <title>SAGA and SAGA-like SLIK transcriptional coactivators are structurally and biochemically equivalent.</title>
        <authorList>
            <person name="Adamus K."/>
            <person name="Reboul C."/>
            <person name="Voss J."/>
            <person name="Huang C."/>
            <person name="Schittenhelm R.B."/>
            <person name="Le S.N."/>
            <person name="Ellisdon A.M."/>
            <person name="Elmlund H."/>
            <person name="Boudes M."/>
            <person name="Elmlund D."/>
        </authorList>
    </citation>
    <scope>FUNCTION</scope>
    <scope>SUBUNIT</scope>
</reference>
<reference key="28">
    <citation type="journal article" date="2004" name="Mol. Cell">
        <title>Molecular architecture of the S. cerevisiae SAGA complex.</title>
        <authorList>
            <person name="Wu P.Y."/>
            <person name="Ruhlmann C."/>
            <person name="Winston F."/>
            <person name="Schultz P."/>
        </authorList>
    </citation>
    <scope>3D-STRUCTURE MODELING OF THE SAGA COMPLEX</scope>
</reference>
<reference evidence="26 27" key="29">
    <citation type="journal article" date="2020" name="Nature">
        <title>Structure of the transcription coactivator SAGA.</title>
        <authorList>
            <person name="Wang H."/>
            <person name="Dienemann C."/>
            <person name="Stutzer A."/>
            <person name="Urlaub H."/>
            <person name="Cheung A.C.M."/>
            <person name="Cramer P."/>
        </authorList>
    </citation>
    <scope>STRUCTURE BY ELECTRON MICROSCOPY (3.30 ANGSTROMS) IN THE SAGA COMPLEX</scope>
</reference>
<protein>
    <recommendedName>
        <fullName>SAGA complex/transcription factor TFIID complex subunit TAF9</fullName>
    </recommendedName>
    <alternativeName>
        <fullName>TAFII-17</fullName>
    </alternativeName>
    <alternativeName>
        <fullName>TAFII20</fullName>
    </alternativeName>
    <alternativeName>
        <fullName>TBP-associated factor 17 kDa</fullName>
    </alternativeName>
    <alternativeName>
        <fullName>TBP-associated factor 9</fullName>
    </alternativeName>
    <alternativeName>
        <fullName>Transcription initiation factor TFIID subunit 9</fullName>
    </alternativeName>
</protein>